<protein>
    <recommendedName>
        <fullName>Aldo-keto reductase family 1 member C18</fullName>
        <ecNumber>1.1.-.-</ecNumber>
    </recommendedName>
    <alternativeName>
        <fullName>20-alpha-hydroxysteroid dehydrogenase</fullName>
        <shortName>20-alpha-HSD</shortName>
        <ecNumber>1.1.1.149</ecNumber>
    </alternativeName>
</protein>
<comment type="function">
    <text>Catalyzes the conversion of progesterone into 20-alpha-dihydroprogesterone (20 alpha-OHP).</text>
</comment>
<comment type="catalytic activity">
    <reaction>
        <text>(17R,20S)-17,20-dihydroxypregn-4-en-3-one + NADP(+) = 17alpha-hydroxyprogesterone + NADPH + H(+)</text>
        <dbReference type="Rhea" id="RHEA:15857"/>
        <dbReference type="ChEBI" id="CHEBI:15378"/>
        <dbReference type="ChEBI" id="CHEBI:16418"/>
        <dbReference type="ChEBI" id="CHEBI:17252"/>
        <dbReference type="ChEBI" id="CHEBI:57783"/>
        <dbReference type="ChEBI" id="CHEBI:58349"/>
        <dbReference type="EC" id="1.1.1.149"/>
    </reaction>
</comment>
<comment type="catalytic activity">
    <reaction>
        <text>(17R,20S)-17,20-dihydroxypregn-4-en-3-one + NAD(+) = 17alpha-hydroxyprogesterone + NADH + H(+)</text>
        <dbReference type="Rhea" id="RHEA:15853"/>
        <dbReference type="ChEBI" id="CHEBI:15378"/>
        <dbReference type="ChEBI" id="CHEBI:16418"/>
        <dbReference type="ChEBI" id="CHEBI:17252"/>
        <dbReference type="ChEBI" id="CHEBI:57540"/>
        <dbReference type="ChEBI" id="CHEBI:57945"/>
        <dbReference type="EC" id="1.1.1.149"/>
    </reaction>
</comment>
<comment type="subunit">
    <text evidence="1">Monomer.</text>
</comment>
<comment type="subcellular location">
    <subcellularLocation>
        <location evidence="1">Cytoplasm</location>
    </subcellularLocation>
</comment>
<comment type="alternative products">
    <event type="alternative splicing"/>
    <isoform>
        <id>Q8K023-1</id>
        <name>1</name>
        <sequence type="displayed"/>
    </isoform>
    <isoform>
        <id>Q8K023-2</id>
        <name>2</name>
        <sequence type="described" ref="VSP_014039"/>
    </isoform>
</comment>
<comment type="similarity">
    <text evidence="3">Belongs to the aldo/keto reductase family.</text>
</comment>
<proteinExistence type="evidence at protein level"/>
<keyword id="KW-0025">Alternative splicing</keyword>
<keyword id="KW-0963">Cytoplasm</keyword>
<keyword id="KW-0521">NADP</keyword>
<keyword id="KW-0560">Oxidoreductase</keyword>
<keyword id="KW-1185">Reference proteome</keyword>
<feature type="chain" id="PRO_0000124649" description="Aldo-keto reductase family 1 member C18">
    <location>
        <begin position="1"/>
        <end position="323"/>
    </location>
</feature>
<feature type="active site" description="Proton donor" evidence="1">
    <location>
        <position position="55"/>
    </location>
</feature>
<feature type="binding site" evidence="1">
    <location>
        <begin position="20"/>
        <end position="24"/>
    </location>
    <ligand>
        <name>NADP(+)</name>
        <dbReference type="ChEBI" id="CHEBI:58349"/>
    </ligand>
</feature>
<feature type="binding site" evidence="1">
    <location>
        <position position="50"/>
    </location>
    <ligand>
        <name>NADP(+)</name>
        <dbReference type="ChEBI" id="CHEBI:58349"/>
    </ligand>
</feature>
<feature type="binding site" evidence="1">
    <location>
        <position position="117"/>
    </location>
    <ligand>
        <name>substrate</name>
    </ligand>
</feature>
<feature type="binding site" evidence="1">
    <location>
        <begin position="166"/>
        <end position="167"/>
    </location>
    <ligand>
        <name>NADP(+)</name>
        <dbReference type="ChEBI" id="CHEBI:58349"/>
    </ligand>
</feature>
<feature type="binding site" evidence="1">
    <location>
        <position position="190"/>
    </location>
    <ligand>
        <name>NADP(+)</name>
        <dbReference type="ChEBI" id="CHEBI:58349"/>
    </ligand>
</feature>
<feature type="binding site" evidence="1">
    <location>
        <begin position="216"/>
        <end position="221"/>
    </location>
    <ligand>
        <name>NADP(+)</name>
        <dbReference type="ChEBI" id="CHEBI:58349"/>
    </ligand>
</feature>
<feature type="binding site" evidence="1">
    <location>
        <begin position="270"/>
        <end position="280"/>
    </location>
    <ligand>
        <name>NADP(+)</name>
        <dbReference type="ChEBI" id="CHEBI:58349"/>
    </ligand>
</feature>
<feature type="site" description="Important for substrate specificity" evidence="1">
    <location>
        <position position="54"/>
    </location>
</feature>
<feature type="site" description="Lowers pKa of active site Tyr" evidence="1">
    <location>
        <position position="84"/>
    </location>
</feature>
<feature type="splice variant" id="VSP_014039" description="In isoform 2." evidence="2">
    <location>
        <begin position="124"/>
        <end position="149"/>
    </location>
</feature>
<sequence length="323" mass="37177">MNSKIQKIELNDGHSIPVLGFGTYATEEHLKKKSMESTKIAIDVGFCHIDCSHLYQNEEEIGQAILSKIEDGTVKREDIFYTSKLWSTSHRPELVRPSLENSLRKLNLDYVDLYLIHFPVSLKPGNELLPKDEHGNLIFDTVDLCDTWEAMEKCKDAGLAKSIGVSNFNRRQLEMILNKPGLKYKPVCNQVECHLYLNQSKLLAYCKMNDIVLVAYGALGTQRYKYCINEDTPVLLDDPVLCAMAKKYKRTPALIALRYQLDRGIVALAKSFNEERIRENMQVFDFQLASDDMKILDGLDRNLRYFPADMFKAHPNFPFFDEY</sequence>
<reference key="1">
    <citation type="journal article" date="1999" name="J. Reprod. Dev.">
        <title>Cloning of mouse 20alpha-hydroxysteroid dehydrogenase cDNA and its mRNA localization during pregnancy.</title>
        <authorList>
            <person name="Ishida M."/>
            <person name="Chang K."/>
            <person name="Hirabayashi K."/>
            <person name="Nishihara M."/>
            <person name="Takahashi M."/>
        </authorList>
    </citation>
    <scope>NUCLEOTIDE SEQUENCE [MRNA] (ISOFORM 1)</scope>
    <source>
        <strain>ICR</strain>
        <tissue>Ovary</tissue>
    </source>
</reference>
<reference key="2">
    <citation type="journal article" date="2004" name="Genome Res.">
        <title>The status, quality, and expansion of the NIH full-length cDNA project: the Mammalian Gene Collection (MGC).</title>
        <authorList>
            <consortium name="The MGC Project Team"/>
        </authorList>
    </citation>
    <scope>NUCLEOTIDE SEQUENCE [LARGE SCALE MRNA] (ISOFORM 2)</scope>
    <source>
        <strain>FVB/N</strain>
        <tissue>Kidney</tissue>
    </source>
</reference>
<reference key="3">
    <citation type="journal article" date="2010" name="Cell">
        <title>A tissue-specific atlas of mouse protein phosphorylation and expression.</title>
        <authorList>
            <person name="Huttlin E.L."/>
            <person name="Jedrychowski M.P."/>
            <person name="Elias J.E."/>
            <person name="Goswami T."/>
            <person name="Rad R."/>
            <person name="Beausoleil S.A."/>
            <person name="Villen J."/>
            <person name="Haas W."/>
            <person name="Sowa M.E."/>
            <person name="Gygi S.P."/>
        </authorList>
    </citation>
    <scope>IDENTIFICATION BY MASS SPECTROMETRY [LARGE SCALE ANALYSIS]</scope>
    <source>
        <tissue>Kidney</tissue>
    </source>
</reference>
<name>AKC1H_MOUSE</name>
<gene>
    <name type="primary">Akr1c18</name>
</gene>
<dbReference type="EC" id="1.1.-.-"/>
<dbReference type="EC" id="1.1.1.149"/>
<dbReference type="EMBL" id="AB059565">
    <property type="protein sequence ID" value="BAB40958.1"/>
    <property type="molecule type" value="mRNA"/>
</dbReference>
<dbReference type="EMBL" id="BC034259">
    <property type="protein sequence ID" value="AAH34259.1"/>
    <property type="molecule type" value="mRNA"/>
</dbReference>
<dbReference type="CCDS" id="CCDS26219.1">
    <molecule id="Q8K023-1"/>
</dbReference>
<dbReference type="CCDS" id="CCDS84006.1">
    <molecule id="Q8K023-2"/>
</dbReference>
<dbReference type="RefSeq" id="NP_001333464.1">
    <molecule id="Q8K023-2"/>
    <property type="nucleotide sequence ID" value="NM_001346535.1"/>
</dbReference>
<dbReference type="RefSeq" id="NP_598827.1">
    <molecule id="Q8K023-1"/>
    <property type="nucleotide sequence ID" value="NM_134066.3"/>
</dbReference>
<dbReference type="SMR" id="Q8K023"/>
<dbReference type="FunCoup" id="Q8K023">
    <property type="interactions" value="521"/>
</dbReference>
<dbReference type="IntAct" id="Q8K023">
    <property type="interactions" value="1"/>
</dbReference>
<dbReference type="STRING" id="10090.ENSMUSP00000021635"/>
<dbReference type="iPTMnet" id="Q8K023"/>
<dbReference type="PhosphoSitePlus" id="Q8K023"/>
<dbReference type="jPOST" id="Q8K023"/>
<dbReference type="PaxDb" id="10090-ENSMUSP00000021635"/>
<dbReference type="PeptideAtlas" id="Q8K023"/>
<dbReference type="ProteomicsDB" id="282063">
    <molecule id="Q8K023-1"/>
</dbReference>
<dbReference type="ProteomicsDB" id="282064">
    <molecule id="Q8K023-2"/>
</dbReference>
<dbReference type="Pumba" id="Q8K023"/>
<dbReference type="DNASU" id="105349"/>
<dbReference type="Ensembl" id="ENSMUST00000021635.9">
    <molecule id="Q8K023-1"/>
    <property type="protein sequence ID" value="ENSMUSP00000021635.8"/>
    <property type="gene ID" value="ENSMUSG00000021214.15"/>
</dbReference>
<dbReference type="Ensembl" id="ENSMUST00000110704.9">
    <molecule id="Q8K023-2"/>
    <property type="protein sequence ID" value="ENSMUSP00000106332.3"/>
    <property type="gene ID" value="ENSMUSG00000021214.15"/>
</dbReference>
<dbReference type="GeneID" id="105349"/>
<dbReference type="KEGG" id="mmu:105349"/>
<dbReference type="UCSC" id="uc007pjj.1">
    <molecule id="Q8K023-1"/>
    <property type="organism name" value="mouse"/>
</dbReference>
<dbReference type="UCSC" id="uc007pjk.1">
    <molecule id="Q8K023-2"/>
    <property type="organism name" value="mouse"/>
</dbReference>
<dbReference type="AGR" id="MGI:2145420"/>
<dbReference type="CTD" id="105349"/>
<dbReference type="MGI" id="MGI:2145420">
    <property type="gene designation" value="Akr1c18"/>
</dbReference>
<dbReference type="VEuPathDB" id="HostDB:ENSMUSG00000021214"/>
<dbReference type="eggNOG" id="KOG1577">
    <property type="taxonomic scope" value="Eukaryota"/>
</dbReference>
<dbReference type="GeneTree" id="ENSGT00940000153677"/>
<dbReference type="HOGENOM" id="CLU_023205_0_0_1"/>
<dbReference type="InParanoid" id="Q8K023"/>
<dbReference type="OMA" id="DWGVSYF"/>
<dbReference type="OrthoDB" id="416253at2759"/>
<dbReference type="PhylomeDB" id="Q8K023"/>
<dbReference type="TreeFam" id="TF106492"/>
<dbReference type="BRENDA" id="1.1.1.149">
    <property type="organism ID" value="3474"/>
</dbReference>
<dbReference type="BioGRID-ORCS" id="105349">
    <property type="hits" value="1 hit in 78 CRISPR screens"/>
</dbReference>
<dbReference type="PRO" id="PR:Q8K023"/>
<dbReference type="Proteomes" id="UP000000589">
    <property type="component" value="Chromosome 13"/>
</dbReference>
<dbReference type="RNAct" id="Q8K023">
    <property type="molecule type" value="protein"/>
</dbReference>
<dbReference type="Bgee" id="ENSMUSG00000021214">
    <property type="expression patterns" value="Expressed in skin of external ear and 67 other cell types or tissues"/>
</dbReference>
<dbReference type="ExpressionAtlas" id="Q8K023">
    <property type="expression patterns" value="baseline and differential"/>
</dbReference>
<dbReference type="GO" id="GO:0005829">
    <property type="term" value="C:cytosol"/>
    <property type="evidence" value="ECO:0000266"/>
    <property type="project" value="MGI"/>
</dbReference>
<dbReference type="GO" id="GO:0047006">
    <property type="term" value="F:17-alpha,20-alpha-dihydroxypregn-4-en-3-one dehydrogenase [NAD(P)+] activity"/>
    <property type="evidence" value="ECO:0000314"/>
    <property type="project" value="MGI"/>
</dbReference>
<dbReference type="GO" id="GO:0004032">
    <property type="term" value="F:aldose reductase (NADPH) activity"/>
    <property type="evidence" value="ECO:0007669"/>
    <property type="project" value="Ensembl"/>
</dbReference>
<dbReference type="GO" id="GO:0071372">
    <property type="term" value="P:cellular response to follicle-stimulating hormone stimulus"/>
    <property type="evidence" value="ECO:0007669"/>
    <property type="project" value="Ensembl"/>
</dbReference>
<dbReference type="GO" id="GO:1904322">
    <property type="term" value="P:cellular response to forskolin"/>
    <property type="evidence" value="ECO:0007669"/>
    <property type="project" value="Ensembl"/>
</dbReference>
<dbReference type="GO" id="GO:0097211">
    <property type="term" value="P:cellular response to gonadotropin-releasing hormone"/>
    <property type="evidence" value="ECO:0007669"/>
    <property type="project" value="Ensembl"/>
</dbReference>
<dbReference type="GO" id="GO:1990646">
    <property type="term" value="P:cellular response to prolactin"/>
    <property type="evidence" value="ECO:0007669"/>
    <property type="project" value="Ensembl"/>
</dbReference>
<dbReference type="GO" id="GO:0071394">
    <property type="term" value="P:cellular response to testosterone stimulus"/>
    <property type="evidence" value="ECO:0007669"/>
    <property type="project" value="Ensembl"/>
</dbReference>
<dbReference type="GO" id="GO:0071560">
    <property type="term" value="P:cellular response to transforming growth factor beta stimulus"/>
    <property type="evidence" value="ECO:0007669"/>
    <property type="project" value="Ensembl"/>
</dbReference>
<dbReference type="GO" id="GO:0007565">
    <property type="term" value="P:female pregnancy"/>
    <property type="evidence" value="ECO:0007669"/>
    <property type="project" value="Ensembl"/>
</dbReference>
<dbReference type="GO" id="GO:0007567">
    <property type="term" value="P:parturition"/>
    <property type="evidence" value="ECO:0000315"/>
    <property type="project" value="MGI"/>
</dbReference>
<dbReference type="GO" id="GO:0006709">
    <property type="term" value="P:progesterone catabolic process"/>
    <property type="evidence" value="ECO:0000314"/>
    <property type="project" value="MGI"/>
</dbReference>
<dbReference type="GO" id="GO:0042448">
    <property type="term" value="P:progesterone metabolic process"/>
    <property type="evidence" value="ECO:0000266"/>
    <property type="project" value="MGI"/>
</dbReference>
<dbReference type="GO" id="GO:0050810">
    <property type="term" value="P:regulation of steroid biosynthetic process"/>
    <property type="evidence" value="ECO:0007669"/>
    <property type="project" value="Ensembl"/>
</dbReference>
<dbReference type="CDD" id="cd19108">
    <property type="entry name" value="AKR_AKR1C1-35"/>
    <property type="match status" value="1"/>
</dbReference>
<dbReference type="FunFam" id="3.20.20.100:FF:000003">
    <property type="entry name" value="Aldo-keto reductase family 1 member C3"/>
    <property type="match status" value="1"/>
</dbReference>
<dbReference type="Gene3D" id="3.20.20.100">
    <property type="entry name" value="NADP-dependent oxidoreductase domain"/>
    <property type="match status" value="1"/>
</dbReference>
<dbReference type="InterPro" id="IPR020471">
    <property type="entry name" value="AKR"/>
</dbReference>
<dbReference type="InterPro" id="IPR044482">
    <property type="entry name" value="AKR1C"/>
</dbReference>
<dbReference type="InterPro" id="IPR018170">
    <property type="entry name" value="Aldo/ket_reductase_CS"/>
</dbReference>
<dbReference type="InterPro" id="IPR023210">
    <property type="entry name" value="NADP_OxRdtase_dom"/>
</dbReference>
<dbReference type="InterPro" id="IPR036812">
    <property type="entry name" value="NADP_OxRdtase_dom_sf"/>
</dbReference>
<dbReference type="PANTHER" id="PTHR11732">
    <property type="entry name" value="ALDO/KETO REDUCTASE"/>
    <property type="match status" value="1"/>
</dbReference>
<dbReference type="Pfam" id="PF00248">
    <property type="entry name" value="Aldo_ket_red"/>
    <property type="match status" value="1"/>
</dbReference>
<dbReference type="PIRSF" id="PIRSF000097">
    <property type="entry name" value="AKR"/>
    <property type="match status" value="1"/>
</dbReference>
<dbReference type="PRINTS" id="PR00069">
    <property type="entry name" value="ALDKETRDTASE"/>
</dbReference>
<dbReference type="SUPFAM" id="SSF51430">
    <property type="entry name" value="NAD(P)-linked oxidoreductase"/>
    <property type="match status" value="1"/>
</dbReference>
<dbReference type="PROSITE" id="PS00062">
    <property type="entry name" value="ALDOKETO_REDUCTASE_2"/>
    <property type="match status" value="1"/>
</dbReference>
<dbReference type="PROSITE" id="PS00063">
    <property type="entry name" value="ALDOKETO_REDUCTASE_3"/>
    <property type="match status" value="1"/>
</dbReference>
<evidence type="ECO:0000250" key="1"/>
<evidence type="ECO:0000303" key="2">
    <source>
    </source>
</evidence>
<evidence type="ECO:0000305" key="3"/>
<accession>Q8K023</accession>
<accession>Q99N44</accession>
<organism>
    <name type="scientific">Mus musculus</name>
    <name type="common">Mouse</name>
    <dbReference type="NCBI Taxonomy" id="10090"/>
    <lineage>
        <taxon>Eukaryota</taxon>
        <taxon>Metazoa</taxon>
        <taxon>Chordata</taxon>
        <taxon>Craniata</taxon>
        <taxon>Vertebrata</taxon>
        <taxon>Euteleostomi</taxon>
        <taxon>Mammalia</taxon>
        <taxon>Eutheria</taxon>
        <taxon>Euarchontoglires</taxon>
        <taxon>Glires</taxon>
        <taxon>Rodentia</taxon>
        <taxon>Myomorpha</taxon>
        <taxon>Muroidea</taxon>
        <taxon>Muridae</taxon>
        <taxon>Murinae</taxon>
        <taxon>Mus</taxon>
        <taxon>Mus</taxon>
    </lineage>
</organism>